<gene>
    <name type="ordered locus">CE0987</name>
</gene>
<keyword id="KW-0456">Lyase</keyword>
<keyword id="KW-0479">Metal-binding</keyword>
<keyword id="KW-1185">Reference proteome</keyword>
<comment type="function">
    <text evidence="1">Catalyzes the aldol cleavage of 4-hydroxy-4-methyl-2-oxoglutarate (HMG) into 2 molecules of pyruvate. Also contains a secondary oxaloacetate (OAA) decarboxylase activity due to the common pyruvate enolate transition state formed following C-C bond cleavage in the retro-aldol and decarboxylation reactions (By similarity).</text>
</comment>
<comment type="catalytic activity">
    <reaction>
        <text>4-hydroxy-4-methyl-2-oxoglutarate = 2 pyruvate</text>
        <dbReference type="Rhea" id="RHEA:22748"/>
        <dbReference type="ChEBI" id="CHEBI:15361"/>
        <dbReference type="ChEBI" id="CHEBI:58276"/>
        <dbReference type="EC" id="4.1.3.17"/>
    </reaction>
</comment>
<comment type="catalytic activity">
    <reaction>
        <text>oxaloacetate + H(+) = pyruvate + CO2</text>
        <dbReference type="Rhea" id="RHEA:15641"/>
        <dbReference type="ChEBI" id="CHEBI:15361"/>
        <dbReference type="ChEBI" id="CHEBI:15378"/>
        <dbReference type="ChEBI" id="CHEBI:16452"/>
        <dbReference type="ChEBI" id="CHEBI:16526"/>
        <dbReference type="EC" id="4.1.1.112"/>
    </reaction>
</comment>
<comment type="cofactor">
    <cofactor evidence="1">
        <name>a divalent metal cation</name>
        <dbReference type="ChEBI" id="CHEBI:60240"/>
    </cofactor>
    <text evidence="1">Divalent metal cation.</text>
</comment>
<comment type="subunit">
    <text evidence="1">Homotrimer.</text>
</comment>
<comment type="similarity">
    <text evidence="2">Belongs to the class II aldolase/RraA-like family.</text>
</comment>
<comment type="sequence caution" evidence="2">
    <conflict type="erroneous initiation">
        <sequence resource="EMBL-CDS" id="BAC17797"/>
    </conflict>
</comment>
<proteinExistence type="inferred from homology"/>
<evidence type="ECO:0000250" key="1"/>
<evidence type="ECO:0000305" key="2"/>
<sequence>MTDTHGTFIPTADLVDIIGDDVRSCDTQFRNLGGRTDFHGTITTVKCFQDNALLKSILGEDNPGGVLVIDGDASLHTALVGDIIAGLGRDHGWSGVVVNGAIRDSAVIGEMEFGCKALGTNPRKSSKTGAGERDVVVSFGGVDFTPGHYLYADSDGIVVTENPVKAPASN</sequence>
<dbReference type="EC" id="4.1.3.17"/>
<dbReference type="EC" id="4.1.1.112"/>
<dbReference type="EMBL" id="BA000035">
    <property type="protein sequence ID" value="BAC17797.1"/>
    <property type="status" value="ALT_INIT"/>
    <property type="molecule type" value="Genomic_DNA"/>
</dbReference>
<dbReference type="RefSeq" id="WP_035109947.1">
    <property type="nucleotide sequence ID" value="NC_004369.1"/>
</dbReference>
<dbReference type="SMR" id="Q8FQY0"/>
<dbReference type="STRING" id="196164.gene:10741393"/>
<dbReference type="KEGG" id="cef:CE0987"/>
<dbReference type="eggNOG" id="COG0684">
    <property type="taxonomic scope" value="Bacteria"/>
</dbReference>
<dbReference type="HOGENOM" id="CLU_072626_4_0_11"/>
<dbReference type="OrthoDB" id="943692at2"/>
<dbReference type="Proteomes" id="UP000001409">
    <property type="component" value="Chromosome"/>
</dbReference>
<dbReference type="GO" id="GO:0047443">
    <property type="term" value="F:4-hydroxy-4-methyl-2-oxoglutarate aldolase activity"/>
    <property type="evidence" value="ECO:0007669"/>
    <property type="project" value="UniProtKB-EC"/>
</dbReference>
<dbReference type="GO" id="GO:0046872">
    <property type="term" value="F:metal ion binding"/>
    <property type="evidence" value="ECO:0007669"/>
    <property type="project" value="UniProtKB-KW"/>
</dbReference>
<dbReference type="GO" id="GO:0008948">
    <property type="term" value="F:oxaloacetate decarboxylase activity"/>
    <property type="evidence" value="ECO:0007669"/>
    <property type="project" value="UniProtKB-EC"/>
</dbReference>
<dbReference type="GO" id="GO:0008428">
    <property type="term" value="F:ribonuclease inhibitor activity"/>
    <property type="evidence" value="ECO:0007669"/>
    <property type="project" value="InterPro"/>
</dbReference>
<dbReference type="GO" id="GO:0051252">
    <property type="term" value="P:regulation of RNA metabolic process"/>
    <property type="evidence" value="ECO:0007669"/>
    <property type="project" value="InterPro"/>
</dbReference>
<dbReference type="CDD" id="cd16841">
    <property type="entry name" value="RraA_family"/>
    <property type="match status" value="1"/>
</dbReference>
<dbReference type="Gene3D" id="3.50.30.40">
    <property type="entry name" value="Ribonuclease E inhibitor RraA/RraA-like"/>
    <property type="match status" value="1"/>
</dbReference>
<dbReference type="InterPro" id="IPR010203">
    <property type="entry name" value="RraA"/>
</dbReference>
<dbReference type="InterPro" id="IPR005493">
    <property type="entry name" value="RraA/RraA-like"/>
</dbReference>
<dbReference type="InterPro" id="IPR036704">
    <property type="entry name" value="RraA/RraA-like_sf"/>
</dbReference>
<dbReference type="NCBIfam" id="TIGR01935">
    <property type="entry name" value="NOT-MenG"/>
    <property type="match status" value="1"/>
</dbReference>
<dbReference type="NCBIfam" id="NF006875">
    <property type="entry name" value="PRK09372.1"/>
    <property type="match status" value="1"/>
</dbReference>
<dbReference type="PANTHER" id="PTHR33254">
    <property type="entry name" value="4-HYDROXY-4-METHYL-2-OXOGLUTARATE ALDOLASE 3-RELATED"/>
    <property type="match status" value="1"/>
</dbReference>
<dbReference type="PANTHER" id="PTHR33254:SF4">
    <property type="entry name" value="4-HYDROXY-4-METHYL-2-OXOGLUTARATE ALDOLASE 3-RELATED"/>
    <property type="match status" value="1"/>
</dbReference>
<dbReference type="Pfam" id="PF03737">
    <property type="entry name" value="RraA-like"/>
    <property type="match status" value="1"/>
</dbReference>
<dbReference type="SUPFAM" id="SSF89562">
    <property type="entry name" value="RraA-like"/>
    <property type="match status" value="1"/>
</dbReference>
<reference key="1">
    <citation type="journal article" date="2003" name="Genome Res.">
        <title>Comparative complete genome sequence analysis of the amino acid replacements responsible for the thermostability of Corynebacterium efficiens.</title>
        <authorList>
            <person name="Nishio Y."/>
            <person name="Nakamura Y."/>
            <person name="Kawarabayasi Y."/>
            <person name="Usuda Y."/>
            <person name="Kimura E."/>
            <person name="Sugimoto S."/>
            <person name="Matsui K."/>
            <person name="Yamagishi A."/>
            <person name="Kikuchi H."/>
            <person name="Ikeo K."/>
            <person name="Gojobori T."/>
        </authorList>
    </citation>
    <scope>NUCLEOTIDE SEQUENCE [LARGE SCALE GENOMIC DNA]</scope>
    <source>
        <strain>DSM 44549 / YS-314 / AJ 12310 / JCM 11189 / NBRC 100395</strain>
    </source>
</reference>
<protein>
    <recommendedName>
        <fullName>Putative 4-hydroxy-4-methyl-2-oxoglutarate aldolase</fullName>
        <shortName>HMG aldolase</shortName>
        <ecNumber>4.1.3.17</ecNumber>
    </recommendedName>
    <alternativeName>
        <fullName>Oxaloacetate decarboxylase</fullName>
        <shortName>OAA decarboxylase</shortName>
        <ecNumber>4.1.1.112</ecNumber>
    </alternativeName>
    <alternativeName>
        <fullName>Regulator of ribonuclease activity homolog</fullName>
    </alternativeName>
    <alternativeName>
        <fullName>RraA-like protein</fullName>
    </alternativeName>
</protein>
<feature type="chain" id="PRO_0000209608" description="Putative 4-hydroxy-4-methyl-2-oxoglutarate aldolase">
    <location>
        <begin position="1"/>
        <end position="170"/>
    </location>
</feature>
<feature type="binding site" evidence="1">
    <location>
        <begin position="81"/>
        <end position="84"/>
    </location>
    <ligand>
        <name>substrate</name>
    </ligand>
</feature>
<feature type="binding site" evidence="1">
    <location>
        <position position="103"/>
    </location>
    <ligand>
        <name>substrate</name>
    </ligand>
</feature>
<feature type="binding site" evidence="1">
    <location>
        <position position="104"/>
    </location>
    <ligand>
        <name>a divalent metal cation</name>
        <dbReference type="ChEBI" id="CHEBI:60240"/>
    </ligand>
</feature>
<name>RRAAH_COREF</name>
<accession>Q8FQY0</accession>
<organism>
    <name type="scientific">Corynebacterium efficiens (strain DSM 44549 / YS-314 / AJ 12310 / JCM 11189 / NBRC 100395)</name>
    <dbReference type="NCBI Taxonomy" id="196164"/>
    <lineage>
        <taxon>Bacteria</taxon>
        <taxon>Bacillati</taxon>
        <taxon>Actinomycetota</taxon>
        <taxon>Actinomycetes</taxon>
        <taxon>Mycobacteriales</taxon>
        <taxon>Corynebacteriaceae</taxon>
        <taxon>Corynebacterium</taxon>
    </lineage>
</organism>